<name>MD2L2_CHICK</name>
<accession>Q4KWZ6</accession>
<protein>
    <recommendedName>
        <fullName>Mitotic spindle assembly checkpoint protein MAD2B</fullName>
    </recommendedName>
    <alternativeName>
        <fullName>Mitotic arrest deficient 2-like protein 2</fullName>
        <shortName>MAD2-like protein 2</shortName>
    </alternativeName>
</protein>
<gene>
    <name type="primary">MAD2L2</name>
    <name type="synonym">REV7</name>
</gene>
<comment type="function">
    <text evidence="1 3 4">Adapter protein able to interact with different proteins and involved in different biological processes. Mediates the interaction between the error-prone DNA polymerase zeta catalytic subunit REV3L and the inserter polymerase REV1, thereby mediating the second polymerase switching in translesion DNA synthesis. Translesion DNA synthesis releases the replication blockade of replicative polymerases, stalled in presence of DNA lesions. May also play a role in signal transduction in response to DNA damage. May regulate the activation of the anaphase promoting complex APC thereby regulating progression through the cell cycle. Component of the shieldin complex, which plays an important role in repair of DNA double-stranded breaks (DSBs). During G1 and S phase of the cell cycle, the complex functions downstream of TP53BP1 to promote non-homologous end joining (NHEJ) and suppress DNA end resection (By similarity). Through transcriptional regulation may play a role in epithelial-mesenchymal transdifferentiation.</text>
</comment>
<comment type="subunit">
    <text evidence="1">Homooligomer. Interacts with REV1. Interacts with FZR1 (in complex with the anaphase promoting complex APC). May interact with CDC20 (By similarity). Heterodimer with REV3L. This dimer forms the minimal DNA polymerase zeta complex (Pol-zeta2), with REV3L bearing DNA polymerase catalytic activity, although its activity is very low in this context. Component of the tetrameric Pol-zeta complex (Pol-zeta4), which consists of REV3L, MAD2L2, POLD2 and POLD3; Pol-zeta4 is the fully active form of DNA polymerase zeta. Component of the shieldin complex, consisting of SHLD1, SHLD2, SHLD3 and MAD2L2/REV7. Within the complex, SHLD2 forms a scaffold which interacts with a SHLD3-MAD2L2 subcomplex via its N-terminus, and with SHLD1 via its C-terminus.</text>
</comment>
<comment type="subcellular location">
    <subcellularLocation>
        <location evidence="1">Nucleus</location>
    </subcellularLocation>
    <subcellularLocation>
        <location evidence="1">Cytoplasm</location>
        <location evidence="1">Cytoskeleton</location>
        <location evidence="1">Spindle</location>
    </subcellularLocation>
    <subcellularLocation>
        <location evidence="1">Cytoplasm</location>
    </subcellularLocation>
    <subcellularLocation>
        <location evidence="1">Chromosome</location>
    </subcellularLocation>
</comment>
<sequence>MTTLTRQDLNFGQVVADVLSEFLEVAVHLILYVREVYPIGIFQKRKKYNVPVQMSCHPELNQYIQDTLHCVKPLLEKNDVEKVVVVILDKEHHPVERFVFEITQPPLLSISSESLLSHVEQLLRAFILKISVCDAVLDNNPPGCTFTVLVHTREAATRNMEKIQVIKDFPWILADEQDVHMHDPRLIPLKTMTSDILKMQLYVEERAHKGT</sequence>
<feature type="chain" id="PRO_0000405245" description="Mitotic spindle assembly checkpoint protein MAD2B">
    <location>
        <begin position="1"/>
        <end position="211"/>
    </location>
</feature>
<feature type="domain" description="HORMA" evidence="2">
    <location>
        <begin position="13"/>
        <end position="203"/>
    </location>
</feature>
<feature type="mutagenesis site" description="Loss of function in DNA repair; when associated with W-171." evidence="4">
    <original>Y</original>
    <variation>A</variation>
    <location>
        <position position="63"/>
    </location>
</feature>
<feature type="mutagenesis site" description="Loss of function in DNA repair; when associated with Y-63." evidence="4">
    <original>W</original>
    <variation>A</variation>
    <location>
        <position position="171"/>
    </location>
</feature>
<reference key="1">
    <citation type="journal article" date="2005" name="Mol. Cell. Biol.">
        <title>Multiple roles of vertebrate REV genes in DNA repair and recombination.</title>
        <authorList>
            <person name="Okada T."/>
            <person name="Sonoda E."/>
            <person name="Yoshimura M."/>
            <person name="Kawano Y."/>
            <person name="Saya H."/>
            <person name="Kohzaki M."/>
            <person name="Takeda S."/>
        </authorList>
    </citation>
    <scope>NUCLEOTIDE SEQUENCE [MRNA]</scope>
    <scope>FUNCTION</scope>
</reference>
<reference key="2">
    <citation type="journal article" date="2010" name="J. Biol. Chem.">
        <title>Crystal structure of human REV7 in complex with a human REV3 fragment and structural implication of the interaction between DNA polymerase zeta and REV1.</title>
        <authorList>
            <person name="Hara K."/>
            <person name="Hashimoto H."/>
            <person name="Murakumo Y."/>
            <person name="Kobayashi S."/>
            <person name="Kogame T."/>
            <person name="Unzai S."/>
            <person name="Akashi S."/>
            <person name="Takeda S."/>
            <person name="Shimizu T."/>
            <person name="Sato M."/>
        </authorList>
    </citation>
    <scope>FUNCTION</scope>
    <scope>MUTAGENESIS OF TYR-63 AND TRP-171</scope>
</reference>
<proteinExistence type="evidence at protein level"/>
<evidence type="ECO:0000250" key="1">
    <source>
        <dbReference type="UniProtKB" id="Q9UI95"/>
    </source>
</evidence>
<evidence type="ECO:0000255" key="2">
    <source>
        <dbReference type="PROSITE-ProRule" id="PRU00109"/>
    </source>
</evidence>
<evidence type="ECO:0000269" key="3">
    <source>
    </source>
</evidence>
<evidence type="ECO:0000269" key="4">
    <source>
    </source>
</evidence>
<keyword id="KW-0131">Cell cycle</keyword>
<keyword id="KW-0132">Cell division</keyword>
<keyword id="KW-0158">Chromosome</keyword>
<keyword id="KW-0963">Cytoplasm</keyword>
<keyword id="KW-0206">Cytoskeleton</keyword>
<keyword id="KW-0227">DNA damage</keyword>
<keyword id="KW-0234">DNA repair</keyword>
<keyword id="KW-0498">Mitosis</keyword>
<keyword id="KW-0539">Nucleus</keyword>
<keyword id="KW-1185">Reference proteome</keyword>
<keyword id="KW-0804">Transcription</keyword>
<keyword id="KW-0805">Transcription regulation</keyword>
<organism>
    <name type="scientific">Gallus gallus</name>
    <name type="common">Chicken</name>
    <dbReference type="NCBI Taxonomy" id="9031"/>
    <lineage>
        <taxon>Eukaryota</taxon>
        <taxon>Metazoa</taxon>
        <taxon>Chordata</taxon>
        <taxon>Craniata</taxon>
        <taxon>Vertebrata</taxon>
        <taxon>Euteleostomi</taxon>
        <taxon>Archelosauria</taxon>
        <taxon>Archosauria</taxon>
        <taxon>Dinosauria</taxon>
        <taxon>Saurischia</taxon>
        <taxon>Theropoda</taxon>
        <taxon>Coelurosauria</taxon>
        <taxon>Aves</taxon>
        <taxon>Neognathae</taxon>
        <taxon>Galloanserae</taxon>
        <taxon>Galliformes</taxon>
        <taxon>Phasianidae</taxon>
        <taxon>Phasianinae</taxon>
        <taxon>Gallus</taxon>
    </lineage>
</organism>
<dbReference type="EMBL" id="AY675170">
    <property type="protein sequence ID" value="AAV97594.1"/>
    <property type="molecule type" value="mRNA"/>
</dbReference>
<dbReference type="RefSeq" id="NP_001020749.1">
    <property type="nucleotide sequence ID" value="NM_001025578.2"/>
</dbReference>
<dbReference type="RefSeq" id="XP_015152403.1">
    <property type="nucleotide sequence ID" value="XM_015296917.1"/>
</dbReference>
<dbReference type="RefSeq" id="XP_015152404.1">
    <property type="nucleotide sequence ID" value="XM_015296918.1"/>
</dbReference>
<dbReference type="RefSeq" id="XP_015152405.1">
    <property type="nucleotide sequence ID" value="XM_015296919.4"/>
</dbReference>
<dbReference type="RefSeq" id="XP_040507128.1">
    <property type="nucleotide sequence ID" value="XM_040651194.2"/>
</dbReference>
<dbReference type="RefSeq" id="XP_046759119.1">
    <property type="nucleotide sequence ID" value="XM_046903163.1"/>
</dbReference>
<dbReference type="RefSeq" id="XP_046759120.1">
    <property type="nucleotide sequence ID" value="XM_046903164.1"/>
</dbReference>
<dbReference type="RefSeq" id="XP_046787286.1">
    <property type="nucleotide sequence ID" value="XM_046931330.1"/>
</dbReference>
<dbReference type="RefSeq" id="XP_046787287.1">
    <property type="nucleotide sequence ID" value="XM_046931331.1"/>
</dbReference>
<dbReference type="RefSeq" id="XP_046787288.1">
    <property type="nucleotide sequence ID" value="XM_046931332.1"/>
</dbReference>
<dbReference type="RefSeq" id="XP_046787289.1">
    <property type="nucleotide sequence ID" value="XM_046931333.1"/>
</dbReference>
<dbReference type="RefSeq" id="XP_046787290.1">
    <property type="nucleotide sequence ID" value="XM_046931334.1"/>
</dbReference>
<dbReference type="SMR" id="Q4KWZ6"/>
<dbReference type="FunCoup" id="Q4KWZ6">
    <property type="interactions" value="298"/>
</dbReference>
<dbReference type="STRING" id="9031.ENSGALP00000007380"/>
<dbReference type="PaxDb" id="9031-ENSGALP00000007380"/>
<dbReference type="Ensembl" id="ENSGALT00010051390.1">
    <property type="protein sequence ID" value="ENSGALP00010030581.1"/>
    <property type="gene ID" value="ENSGALG00010021207.1"/>
</dbReference>
<dbReference type="GeneID" id="419493"/>
<dbReference type="KEGG" id="gga:419493"/>
<dbReference type="CTD" id="10459"/>
<dbReference type="VEuPathDB" id="HostDB:geneid_419493"/>
<dbReference type="eggNOG" id="KOG3186">
    <property type="taxonomic scope" value="Eukaryota"/>
</dbReference>
<dbReference type="GeneTree" id="ENSGT00940000153395"/>
<dbReference type="HOGENOM" id="CLU_050394_2_0_1"/>
<dbReference type="InParanoid" id="Q4KWZ6"/>
<dbReference type="OMA" id="CEDFPWI"/>
<dbReference type="OrthoDB" id="21254at2759"/>
<dbReference type="PhylomeDB" id="Q4KWZ6"/>
<dbReference type="TreeFam" id="TF101085"/>
<dbReference type="Reactome" id="R-GGA-110312">
    <property type="pathway name" value="Translesion synthesis by REV1"/>
</dbReference>
<dbReference type="Reactome" id="R-GGA-353299">
    <property type="pathway name" value="RAD18 and ubiquitinated PCNA-mediated recruitment of translesion polymerases"/>
</dbReference>
<dbReference type="Reactome" id="R-GGA-353473">
    <property type="pathway name" value="Translesion synthesis by Pol zeta"/>
</dbReference>
<dbReference type="Reactome" id="R-GGA-5655862">
    <property type="pathway name" value="Translesion synthesis by POLK"/>
</dbReference>
<dbReference type="Reactome" id="R-GGA-5656121">
    <property type="pathway name" value="Translesion synthesis by POLI"/>
</dbReference>
<dbReference type="PRO" id="PR:Q4KWZ6"/>
<dbReference type="Proteomes" id="UP000000539">
    <property type="component" value="Chromosome 21"/>
</dbReference>
<dbReference type="Bgee" id="ENSGALG00000004640">
    <property type="expression patterns" value="Expressed in skeletal muscle tissue and 12 other cell types or tissues"/>
</dbReference>
<dbReference type="GO" id="GO:0005694">
    <property type="term" value="C:chromosome"/>
    <property type="evidence" value="ECO:0007669"/>
    <property type="project" value="UniProtKB-SubCell"/>
</dbReference>
<dbReference type="GO" id="GO:0005737">
    <property type="term" value="C:cytoplasm"/>
    <property type="evidence" value="ECO:0007669"/>
    <property type="project" value="UniProtKB-SubCell"/>
</dbReference>
<dbReference type="GO" id="GO:0005654">
    <property type="term" value="C:nucleoplasm"/>
    <property type="evidence" value="ECO:0000304"/>
    <property type="project" value="Reactome"/>
</dbReference>
<dbReference type="GO" id="GO:0005634">
    <property type="term" value="C:nucleus"/>
    <property type="evidence" value="ECO:0000250"/>
    <property type="project" value="UniProtKB"/>
</dbReference>
<dbReference type="GO" id="GO:0005819">
    <property type="term" value="C:spindle"/>
    <property type="evidence" value="ECO:0000250"/>
    <property type="project" value="UniProtKB"/>
</dbReference>
<dbReference type="GO" id="GO:0016035">
    <property type="term" value="C:zeta DNA polymerase complex"/>
    <property type="evidence" value="ECO:0000250"/>
    <property type="project" value="UniProtKB"/>
</dbReference>
<dbReference type="GO" id="GO:0017125">
    <property type="term" value="F:deoxycytidyl transferase activity"/>
    <property type="evidence" value="ECO:0000250"/>
    <property type="project" value="AgBase"/>
</dbReference>
<dbReference type="GO" id="GO:0051301">
    <property type="term" value="P:cell division"/>
    <property type="evidence" value="ECO:0007669"/>
    <property type="project" value="UniProtKB-KW"/>
</dbReference>
<dbReference type="GO" id="GO:0042772">
    <property type="term" value="P:DNA damage response, signal transduction resulting in transcription"/>
    <property type="evidence" value="ECO:0000250"/>
    <property type="project" value="UniProtKB"/>
</dbReference>
<dbReference type="GO" id="GO:0006281">
    <property type="term" value="P:DNA repair"/>
    <property type="evidence" value="ECO:0000315"/>
    <property type="project" value="UniProtKB"/>
</dbReference>
<dbReference type="GO" id="GO:0000724">
    <property type="term" value="P:double-strand break repair via homologous recombination"/>
    <property type="evidence" value="ECO:0000315"/>
    <property type="project" value="UniProtKB"/>
</dbReference>
<dbReference type="GO" id="GO:0042276">
    <property type="term" value="P:error-prone translesion synthesis"/>
    <property type="evidence" value="ECO:0000250"/>
    <property type="project" value="AgBase"/>
</dbReference>
<dbReference type="GO" id="GO:0042177">
    <property type="term" value="P:negative regulation of protein catabolic process"/>
    <property type="evidence" value="ECO:0000250"/>
    <property type="project" value="UniProtKB"/>
</dbReference>
<dbReference type="GO" id="GO:1904667">
    <property type="term" value="P:negative regulation of ubiquitin protein ligase activity"/>
    <property type="evidence" value="ECO:0000250"/>
    <property type="project" value="UniProtKB"/>
</dbReference>
<dbReference type="GO" id="GO:0045893">
    <property type="term" value="P:positive regulation of DNA-templated transcription"/>
    <property type="evidence" value="ECO:0000250"/>
    <property type="project" value="UniProtKB"/>
</dbReference>
<dbReference type="GO" id="GO:0033138">
    <property type="term" value="P:positive regulation of peptidyl-serine phosphorylation"/>
    <property type="evidence" value="ECO:0000250"/>
    <property type="project" value="UniProtKB"/>
</dbReference>
<dbReference type="GO" id="GO:0001558">
    <property type="term" value="P:regulation of cell growth"/>
    <property type="evidence" value="ECO:0000315"/>
    <property type="project" value="UniProtKB"/>
</dbReference>
<dbReference type="GO" id="GO:0009411">
    <property type="term" value="P:response to UV"/>
    <property type="evidence" value="ECO:0000250"/>
    <property type="project" value="AgBase"/>
</dbReference>
<dbReference type="FunFam" id="3.30.900.10:FF:000003">
    <property type="entry name" value="Mitotic spindle assembly checkpoint protein MAD2B"/>
    <property type="match status" value="1"/>
</dbReference>
<dbReference type="Gene3D" id="3.30.900.10">
    <property type="entry name" value="HORMA domain"/>
    <property type="match status" value="1"/>
</dbReference>
<dbReference type="InterPro" id="IPR003511">
    <property type="entry name" value="HORMA_dom"/>
</dbReference>
<dbReference type="InterPro" id="IPR036570">
    <property type="entry name" value="HORMA_dom_sf"/>
</dbReference>
<dbReference type="InterPro" id="IPR045091">
    <property type="entry name" value="Mad2-like"/>
</dbReference>
<dbReference type="PANTHER" id="PTHR11842">
    <property type="entry name" value="MITOTIC SPINDLE ASSEMBLY CHECKPOINT PROTEIN MAD2"/>
    <property type="match status" value="1"/>
</dbReference>
<dbReference type="PANTHER" id="PTHR11842:SF10">
    <property type="entry name" value="MITOTIC SPINDLE ASSEMBLY CHECKPOINT PROTEIN MAD2B"/>
    <property type="match status" value="1"/>
</dbReference>
<dbReference type="Pfam" id="PF02301">
    <property type="entry name" value="HORMA"/>
    <property type="match status" value="1"/>
</dbReference>
<dbReference type="SUPFAM" id="SSF56019">
    <property type="entry name" value="The spindle assembly checkpoint protein mad2"/>
    <property type="match status" value="1"/>
</dbReference>
<dbReference type="PROSITE" id="PS50815">
    <property type="entry name" value="HORMA"/>
    <property type="match status" value="1"/>
</dbReference>